<proteinExistence type="evidence at protein level"/>
<reference key="1">
    <citation type="submission" date="2003-03" db="EMBL/GenBank/DDBJ databases">
        <authorList>
            <person name="Huang C.Q."/>
            <person name="Wu S.L."/>
            <person name="Shan Y.X."/>
            <person name="Xiao P.J."/>
        </authorList>
    </citation>
    <scope>NUCLEOTIDE SEQUENCE [MRNA] (ISOFORMS 1 AND 4)</scope>
</reference>
<reference key="2">
    <citation type="journal article" date="2005" name="Nature">
        <title>Generation and annotation of the DNA sequences of human chromosomes 2 and 4.</title>
        <authorList>
            <person name="Hillier L.W."/>
            <person name="Graves T.A."/>
            <person name="Fulton R.S."/>
            <person name="Fulton L.A."/>
            <person name="Pepin K.H."/>
            <person name="Minx P."/>
            <person name="Wagner-McPherson C."/>
            <person name="Layman D."/>
            <person name="Wylie K."/>
            <person name="Sekhon M."/>
            <person name="Becker M.C."/>
            <person name="Fewell G.A."/>
            <person name="Delehaunty K.D."/>
            <person name="Miner T.L."/>
            <person name="Nash W.E."/>
            <person name="Kremitzki C."/>
            <person name="Oddy L."/>
            <person name="Du H."/>
            <person name="Sun H."/>
            <person name="Bradshaw-Cordum H."/>
            <person name="Ali J."/>
            <person name="Carter J."/>
            <person name="Cordes M."/>
            <person name="Harris A."/>
            <person name="Isak A."/>
            <person name="van Brunt A."/>
            <person name="Nguyen C."/>
            <person name="Du F."/>
            <person name="Courtney L."/>
            <person name="Kalicki J."/>
            <person name="Ozersky P."/>
            <person name="Abbott S."/>
            <person name="Armstrong J."/>
            <person name="Belter E.A."/>
            <person name="Caruso L."/>
            <person name="Cedroni M."/>
            <person name="Cotton M."/>
            <person name="Davidson T."/>
            <person name="Desai A."/>
            <person name="Elliott G."/>
            <person name="Erb T."/>
            <person name="Fronick C."/>
            <person name="Gaige T."/>
            <person name="Haakenson W."/>
            <person name="Haglund K."/>
            <person name="Holmes A."/>
            <person name="Harkins R."/>
            <person name="Kim K."/>
            <person name="Kruchowski S.S."/>
            <person name="Strong C.M."/>
            <person name="Grewal N."/>
            <person name="Goyea E."/>
            <person name="Hou S."/>
            <person name="Levy A."/>
            <person name="Martinka S."/>
            <person name="Mead K."/>
            <person name="McLellan M.D."/>
            <person name="Meyer R."/>
            <person name="Randall-Maher J."/>
            <person name="Tomlinson C."/>
            <person name="Dauphin-Kohlberg S."/>
            <person name="Kozlowicz-Reilly A."/>
            <person name="Shah N."/>
            <person name="Swearengen-Shahid S."/>
            <person name="Snider J."/>
            <person name="Strong J.T."/>
            <person name="Thompson J."/>
            <person name="Yoakum M."/>
            <person name="Leonard S."/>
            <person name="Pearman C."/>
            <person name="Trani L."/>
            <person name="Radionenko M."/>
            <person name="Waligorski J.E."/>
            <person name="Wang C."/>
            <person name="Rock S.M."/>
            <person name="Tin-Wollam A.-M."/>
            <person name="Maupin R."/>
            <person name="Latreille P."/>
            <person name="Wendl M.C."/>
            <person name="Yang S.-P."/>
            <person name="Pohl C."/>
            <person name="Wallis J.W."/>
            <person name="Spieth J."/>
            <person name="Bieri T.A."/>
            <person name="Berkowicz N."/>
            <person name="Nelson J.O."/>
            <person name="Osborne J."/>
            <person name="Ding L."/>
            <person name="Meyer R."/>
            <person name="Sabo A."/>
            <person name="Shotland Y."/>
            <person name="Sinha P."/>
            <person name="Wohldmann P.E."/>
            <person name="Cook L.L."/>
            <person name="Hickenbotham M.T."/>
            <person name="Eldred J."/>
            <person name="Williams D."/>
            <person name="Jones T.A."/>
            <person name="She X."/>
            <person name="Ciccarelli F.D."/>
            <person name="Izaurralde E."/>
            <person name="Taylor J."/>
            <person name="Schmutz J."/>
            <person name="Myers R.M."/>
            <person name="Cox D.R."/>
            <person name="Huang X."/>
            <person name="McPherson J.D."/>
            <person name="Mardis E.R."/>
            <person name="Clifton S.W."/>
            <person name="Warren W.C."/>
            <person name="Chinwalla A.T."/>
            <person name="Eddy S.R."/>
            <person name="Marra M.A."/>
            <person name="Ovcharenko I."/>
            <person name="Furey T.S."/>
            <person name="Miller W."/>
            <person name="Eichler E.E."/>
            <person name="Bork P."/>
            <person name="Suyama M."/>
            <person name="Torrents D."/>
            <person name="Waterston R.H."/>
            <person name="Wilson R.K."/>
        </authorList>
    </citation>
    <scope>NUCLEOTIDE SEQUENCE [LARGE SCALE GENOMIC DNA]</scope>
</reference>
<reference key="3">
    <citation type="journal article" date="2004" name="Genome Res.">
        <title>The status, quality, and expansion of the NIH full-length cDNA project: the Mammalian Gene Collection (MGC).</title>
        <authorList>
            <consortium name="The MGC Project Team"/>
        </authorList>
    </citation>
    <scope>NUCLEOTIDE SEQUENCE [LARGE SCALE MRNA] (ISOFORMS 1; 2; 3; 5 AND 6)</scope>
</reference>
<reference key="4">
    <citation type="journal article" date="2015" name="PLoS ONE">
        <title>Global analysis of CPEBs reveals sequential and non-redundant functions in mitotic cell cycle.</title>
        <authorList>
            <person name="Giangarra V."/>
            <person name="Igea A."/>
            <person name="Castellazzi C.L."/>
            <person name="Bava F.A."/>
            <person name="Mendez R."/>
        </authorList>
    </citation>
    <scope>FUNCTION</scope>
</reference>
<accession>Q7Z5Q1</accession>
<accession>E7EPM3</accession>
<accession>F5H160</accession>
<accession>Q3B8N6</accession>
<accession>Q3MI89</accession>
<accession>Q3MI90</accession>
<accession>Q3MI92</accession>
<accession>Q7Z5Q0</accession>
<feature type="chain" id="PRO_0000269259" description="Cytoplasmic polyadenylation element-binding protein 2">
    <location>
        <begin position="1"/>
        <end position="589"/>
    </location>
</feature>
<feature type="domain" description="RRM 1" evidence="2">
    <location>
        <begin position="332"/>
        <end position="423"/>
    </location>
</feature>
<feature type="domain" description="RRM 2" evidence="2">
    <location>
        <begin position="440"/>
        <end position="522"/>
    </location>
</feature>
<feature type="region of interest" description="Disordered" evidence="3">
    <location>
        <begin position="1"/>
        <end position="103"/>
    </location>
</feature>
<feature type="region of interest" description="Disordered" evidence="3">
    <location>
        <begin position="118"/>
        <end position="140"/>
    </location>
</feature>
<feature type="compositionally biased region" description="Low complexity" evidence="3">
    <location>
        <begin position="24"/>
        <end position="33"/>
    </location>
</feature>
<feature type="compositionally biased region" description="Gly residues" evidence="3">
    <location>
        <begin position="44"/>
        <end position="53"/>
    </location>
</feature>
<feature type="compositionally biased region" description="Pro residues" evidence="3">
    <location>
        <begin position="60"/>
        <end position="81"/>
    </location>
</feature>
<feature type="compositionally biased region" description="Low complexity" evidence="3">
    <location>
        <begin position="82"/>
        <end position="103"/>
    </location>
</feature>
<feature type="compositionally biased region" description="Low complexity" evidence="3">
    <location>
        <begin position="130"/>
        <end position="140"/>
    </location>
</feature>
<feature type="modified residue" description="Phosphoserine" evidence="1">
    <location>
        <position position="89"/>
    </location>
</feature>
<feature type="splice variant" id="VSP_055670" description="In isoform 7 and isoform 8." evidence="7">
    <original>M</original>
    <variation>MRDFGFGVLQTAPLRSSSPGPLFCGEAYGPYAVGSVNPLPSATPFGPLSPPPLPVTGFLEAASPFSVPLGGGAGSPAAAASSSSPFLAHQQTMQDELLLGLTQQPARPLSGAAATEKLPDHHPGGGTIAGVTHLLPSQDFKPSLHHPSSSSASSCCCCRTSSPQDFSKRQQQQLSSQKRKEFSPPHLPHPPDSKPPPPPPPLHCPGRFSPPPPPAGPLLQPAQLAQRQQQQPPQQFSLLHQQHLSPQDFAPRQRPADLPPLPQLPPSPPAAPRRRHGGAGSPRKTPAAGEGSAAESPNAGLASSTPVNPAPGSMESPNHPLLNSPSNLLPGGALGAGAFSSLQSPDLPHPGGGGGGGGGGPPGGGGGGGSASPPPLPGFGTPWSVQTASPPPQPQQPPPTQPQQQPPPPQQPPQPQPQPPGSSATTPGGGSGGSLSAM</variation>
    <location>
        <position position="1"/>
    </location>
</feature>
<feature type="splice variant" id="VSP_022030" description="In isoform 2 and isoform 6." evidence="5">
    <location>
        <begin position="43"/>
        <end position="64"/>
    </location>
</feature>
<feature type="splice variant" id="VSP_022031" description="In isoform 4 and isoform 5." evidence="5 6">
    <location>
        <begin position="212"/>
        <end position="241"/>
    </location>
</feature>
<feature type="splice variant" id="VSP_022032" description="In isoform 3, isoform 6 and isoform 7." evidence="5">
    <original>SSLQLPAWGSDSLQDSWCTAAGTSRIDQ</original>
    <variation>M</variation>
    <location>
        <begin position="214"/>
        <end position="241"/>
    </location>
</feature>
<feature type="splice variant" id="VSP_027372" description="In isoform 2, isoform 5, isoform 6, isoform 7 and isoform 8." evidence="5">
    <original>N</original>
    <variation>NARSYGRRR</variation>
    <location>
        <position position="288"/>
    </location>
</feature>
<feature type="sequence conflict" description="In Ref. 2; AAI03942." evidence="7" ref="2">
    <original>G</original>
    <variation>GG</variation>
    <location>
        <position position="50"/>
    </location>
</feature>
<name>CPEB2_HUMAN</name>
<dbReference type="EMBL" id="AY247744">
    <property type="protein sequence ID" value="AAP37585.1"/>
    <property type="molecule type" value="mRNA"/>
</dbReference>
<dbReference type="EMBL" id="AY255519">
    <property type="protein sequence ID" value="AAP41553.1"/>
    <property type="molecule type" value="mRNA"/>
</dbReference>
<dbReference type="EMBL" id="AC098829">
    <property type="status" value="NOT_ANNOTATED_CDS"/>
    <property type="molecule type" value="Genomic_DNA"/>
</dbReference>
<dbReference type="EMBL" id="AC105289">
    <property type="status" value="NOT_ANNOTATED_CDS"/>
    <property type="molecule type" value="Genomic_DNA"/>
</dbReference>
<dbReference type="EMBL" id="AC114749">
    <property type="status" value="NOT_ANNOTATED_CDS"/>
    <property type="molecule type" value="Genomic_DNA"/>
</dbReference>
<dbReference type="EMBL" id="BC103939">
    <property type="protein sequence ID" value="AAI03940.2"/>
    <property type="molecule type" value="mRNA"/>
</dbReference>
<dbReference type="EMBL" id="BC103940">
    <property type="protein sequence ID" value="AAI03941.1"/>
    <property type="molecule type" value="mRNA"/>
</dbReference>
<dbReference type="EMBL" id="BC103941">
    <property type="protein sequence ID" value="AAI03942.1"/>
    <property type="molecule type" value="mRNA"/>
</dbReference>
<dbReference type="EMBL" id="BC103942">
    <property type="protein sequence ID" value="AAI03943.1"/>
    <property type="molecule type" value="mRNA"/>
</dbReference>
<dbReference type="EMBL" id="BC105925">
    <property type="protein sequence ID" value="AAI05926.1"/>
    <property type="molecule type" value="mRNA"/>
</dbReference>
<dbReference type="CCDS" id="CCDS56325.1">
    <molecule id="Q7Z5Q1-9"/>
</dbReference>
<dbReference type="CCDS" id="CCDS56326.1">
    <molecule id="Q7Z5Q1-8"/>
</dbReference>
<dbReference type="RefSeq" id="NP_001170852.1">
    <molecule id="Q7Z5Q1-8"/>
    <property type="nucleotide sequence ID" value="NM_001177381.2"/>
</dbReference>
<dbReference type="RefSeq" id="NP_001170853.1">
    <molecule id="Q7Z5Q1-9"/>
    <property type="nucleotide sequence ID" value="NM_001177382.2"/>
</dbReference>
<dbReference type="RefSeq" id="NP_001170854.1">
    <property type="nucleotide sequence ID" value="NM_001177383.1"/>
</dbReference>
<dbReference type="RefSeq" id="NP_001170855.1">
    <property type="nucleotide sequence ID" value="NM_001177384.1"/>
</dbReference>
<dbReference type="RefSeq" id="NP_872291.2">
    <property type="nucleotide sequence ID" value="NM_182485.2"/>
</dbReference>
<dbReference type="RefSeq" id="NP_872587.2">
    <property type="nucleotide sequence ID" value="NM_182646.2"/>
</dbReference>
<dbReference type="SMR" id="Q7Z5Q1"/>
<dbReference type="BioGRID" id="126338">
    <property type="interactions" value="44"/>
</dbReference>
<dbReference type="FunCoup" id="Q7Z5Q1">
    <property type="interactions" value="393"/>
</dbReference>
<dbReference type="IntAct" id="Q7Z5Q1">
    <property type="interactions" value="2"/>
</dbReference>
<dbReference type="MINT" id="Q7Z5Q1"/>
<dbReference type="STRING" id="9606.ENSP00000443985"/>
<dbReference type="iPTMnet" id="Q7Z5Q1"/>
<dbReference type="PhosphoSitePlus" id="Q7Z5Q1"/>
<dbReference type="SwissPalm" id="Q7Z5Q1"/>
<dbReference type="BioMuta" id="CPEB2"/>
<dbReference type="DMDM" id="158937340"/>
<dbReference type="jPOST" id="Q7Z5Q1"/>
<dbReference type="MassIVE" id="Q7Z5Q1"/>
<dbReference type="PaxDb" id="9606-ENSP00000443985"/>
<dbReference type="PeptideAtlas" id="Q7Z5Q1"/>
<dbReference type="ProteomicsDB" id="17391"/>
<dbReference type="ProteomicsDB" id="25551"/>
<dbReference type="ProteomicsDB" id="69342">
    <molecule id="Q7Z5Q1-2"/>
</dbReference>
<dbReference type="ProteomicsDB" id="69343">
    <molecule id="Q7Z5Q1-3"/>
</dbReference>
<dbReference type="ProteomicsDB" id="69344">
    <molecule id="Q7Z5Q1-4"/>
</dbReference>
<dbReference type="ProteomicsDB" id="69345">
    <molecule id="Q7Z5Q1-5"/>
</dbReference>
<dbReference type="ProteomicsDB" id="69346">
    <molecule id="Q7Z5Q1-6"/>
</dbReference>
<dbReference type="ProteomicsDB" id="69347">
    <molecule id="Q7Z5Q1-7"/>
</dbReference>
<dbReference type="Pumba" id="Q7Z5Q1"/>
<dbReference type="Antibodypedia" id="22933">
    <property type="antibodies" value="109 antibodies from 17 providers"/>
</dbReference>
<dbReference type="DNASU" id="132864"/>
<dbReference type="Ensembl" id="ENST00000442003.6">
    <molecule id="Q7Z5Q1-8"/>
    <property type="protein sequence ID" value="ENSP00000414270.2"/>
    <property type="gene ID" value="ENSG00000137449.17"/>
</dbReference>
<dbReference type="Ensembl" id="ENST00000538197.7">
    <molecule id="Q7Z5Q1-9"/>
    <property type="protein sequence ID" value="ENSP00000443985.1"/>
    <property type="gene ID" value="ENSG00000137449.17"/>
</dbReference>
<dbReference type="GeneID" id="132864"/>
<dbReference type="KEGG" id="hsa:132864"/>
<dbReference type="MANE-Select" id="ENST00000538197.7">
    <molecule id="Q7Z5Q1-9"/>
    <property type="protein sequence ID" value="ENSP00000443985.1"/>
    <property type="RefSeq nucleotide sequence ID" value="NM_001177382.2"/>
    <property type="RefSeq protein sequence ID" value="NP_001170853.1"/>
</dbReference>
<dbReference type="UCSC" id="uc003gnk.2">
    <molecule id="Q7Z5Q1-2"/>
    <property type="organism name" value="human"/>
</dbReference>
<dbReference type="AGR" id="HGNC:21745"/>
<dbReference type="CTD" id="132864"/>
<dbReference type="DisGeNET" id="132864"/>
<dbReference type="GeneCards" id="CPEB2"/>
<dbReference type="HGNC" id="HGNC:21745">
    <property type="gene designation" value="CPEB2"/>
</dbReference>
<dbReference type="HPA" id="ENSG00000137449">
    <property type="expression patterns" value="Low tissue specificity"/>
</dbReference>
<dbReference type="MIM" id="610605">
    <property type="type" value="gene"/>
</dbReference>
<dbReference type="neXtProt" id="NX_Q7Z5Q1"/>
<dbReference type="OpenTargets" id="ENSG00000137449"/>
<dbReference type="PharmGKB" id="PA134864048"/>
<dbReference type="VEuPathDB" id="HostDB:ENSG00000137449"/>
<dbReference type="eggNOG" id="KOG0129">
    <property type="taxonomic scope" value="Eukaryota"/>
</dbReference>
<dbReference type="GeneTree" id="ENSGT00940000160357"/>
<dbReference type="HOGENOM" id="CLU_014948_2_0_1"/>
<dbReference type="InParanoid" id="Q7Z5Q1"/>
<dbReference type="OMA" id="QRSIHQQ"/>
<dbReference type="OrthoDB" id="10033548at2759"/>
<dbReference type="PAN-GO" id="Q7Z5Q1">
    <property type="GO annotations" value="10 GO annotations based on evolutionary models"/>
</dbReference>
<dbReference type="PhylomeDB" id="Q7Z5Q1"/>
<dbReference type="TreeFam" id="TF317658"/>
<dbReference type="PathwayCommons" id="Q7Z5Q1"/>
<dbReference type="BioGRID-ORCS" id="132864">
    <property type="hits" value="17 hits in 1156 CRISPR screens"/>
</dbReference>
<dbReference type="CD-CODE" id="6209F224">
    <property type="entry name" value="Synthetic Condensate 000281"/>
</dbReference>
<dbReference type="CD-CODE" id="DEE660B4">
    <property type="entry name" value="Stress granule"/>
</dbReference>
<dbReference type="ChiTaRS" id="CPEB2">
    <property type="organism name" value="human"/>
</dbReference>
<dbReference type="GenomeRNAi" id="132864"/>
<dbReference type="Pharos" id="Q7Z5Q1">
    <property type="development level" value="Tbio"/>
</dbReference>
<dbReference type="PRO" id="PR:Q7Z5Q1"/>
<dbReference type="Proteomes" id="UP000005640">
    <property type="component" value="Chromosome 4"/>
</dbReference>
<dbReference type="RNAct" id="Q7Z5Q1">
    <property type="molecule type" value="protein"/>
</dbReference>
<dbReference type="Bgee" id="ENSG00000137449">
    <property type="expression patterns" value="Expressed in sperm and 188 other cell types or tissues"/>
</dbReference>
<dbReference type="ExpressionAtlas" id="Q7Z5Q1">
    <property type="expression patterns" value="baseline and differential"/>
</dbReference>
<dbReference type="GO" id="GO:0005737">
    <property type="term" value="C:cytoplasm"/>
    <property type="evidence" value="ECO:0000314"/>
    <property type="project" value="UniProtKB"/>
</dbReference>
<dbReference type="GO" id="GO:0043005">
    <property type="term" value="C:neuron projection"/>
    <property type="evidence" value="ECO:0000318"/>
    <property type="project" value="GO_Central"/>
</dbReference>
<dbReference type="GO" id="GO:0005634">
    <property type="term" value="C:nucleus"/>
    <property type="evidence" value="ECO:0000314"/>
    <property type="project" value="UniProtKB"/>
</dbReference>
<dbReference type="GO" id="GO:0045202">
    <property type="term" value="C:synapse"/>
    <property type="evidence" value="ECO:0000318"/>
    <property type="project" value="GO_Central"/>
</dbReference>
<dbReference type="GO" id="GO:0005095">
    <property type="term" value="F:GTPase inhibitor activity"/>
    <property type="evidence" value="ECO:0000250"/>
    <property type="project" value="UniProtKB"/>
</dbReference>
<dbReference type="GO" id="GO:0035925">
    <property type="term" value="F:mRNA 3'-UTR AU-rich region binding"/>
    <property type="evidence" value="ECO:0000250"/>
    <property type="project" value="UniProtKB"/>
</dbReference>
<dbReference type="GO" id="GO:0003730">
    <property type="term" value="F:mRNA 3'-UTR binding"/>
    <property type="evidence" value="ECO:0000318"/>
    <property type="project" value="GO_Central"/>
</dbReference>
<dbReference type="GO" id="GO:0000900">
    <property type="term" value="F:mRNA regulatory element binding translation repressor activity"/>
    <property type="evidence" value="ECO:0000250"/>
    <property type="project" value="UniProtKB"/>
</dbReference>
<dbReference type="GO" id="GO:0043023">
    <property type="term" value="F:ribosomal large subunit binding"/>
    <property type="evidence" value="ECO:0000250"/>
    <property type="project" value="UniProtKB"/>
</dbReference>
<dbReference type="GO" id="GO:0043024">
    <property type="term" value="F:ribosomal small subunit binding"/>
    <property type="evidence" value="ECO:0000250"/>
    <property type="project" value="UniProtKB"/>
</dbReference>
<dbReference type="GO" id="GO:0043022">
    <property type="term" value="F:ribosome binding"/>
    <property type="evidence" value="ECO:0000250"/>
    <property type="project" value="UniProtKB"/>
</dbReference>
<dbReference type="GO" id="GO:0003723">
    <property type="term" value="F:RNA binding"/>
    <property type="evidence" value="ECO:0007005"/>
    <property type="project" value="UniProtKB"/>
</dbReference>
<dbReference type="GO" id="GO:0008135">
    <property type="term" value="F:translation factor activity, RNA binding"/>
    <property type="evidence" value="ECO:0000318"/>
    <property type="project" value="GO_Central"/>
</dbReference>
<dbReference type="GO" id="GO:0071456">
    <property type="term" value="P:cellular response to hypoxia"/>
    <property type="evidence" value="ECO:0000314"/>
    <property type="project" value="UniProtKB"/>
</dbReference>
<dbReference type="GO" id="GO:0032869">
    <property type="term" value="P:cellular response to insulin stimulus"/>
    <property type="evidence" value="ECO:0000314"/>
    <property type="project" value="UniProtKB"/>
</dbReference>
<dbReference type="GO" id="GO:2000766">
    <property type="term" value="P:negative regulation of cytoplasmic translation"/>
    <property type="evidence" value="ECO:0000315"/>
    <property type="project" value="UniProtKB"/>
</dbReference>
<dbReference type="GO" id="GO:1900248">
    <property type="term" value="P:negative regulation of cytoplasmic translational elongation"/>
    <property type="evidence" value="ECO:0000250"/>
    <property type="project" value="UniProtKB"/>
</dbReference>
<dbReference type="CDD" id="cd19757">
    <property type="entry name" value="Bbox1"/>
    <property type="match status" value="1"/>
</dbReference>
<dbReference type="CDD" id="cd12724">
    <property type="entry name" value="RRM1_CPEB2_like"/>
    <property type="match status" value="1"/>
</dbReference>
<dbReference type="CDD" id="cd12726">
    <property type="entry name" value="RRM2_CPEB2_like"/>
    <property type="match status" value="1"/>
</dbReference>
<dbReference type="FunFam" id="3.30.70.330:FF:000008">
    <property type="entry name" value="Cytoplasmic polyadenylation element-binding 2 isoform X2"/>
    <property type="match status" value="1"/>
</dbReference>
<dbReference type="FunFam" id="4.10.640.40:FF:000001">
    <property type="entry name" value="Cytoplasmic polyadenylation element-binding 2 isoform X2"/>
    <property type="match status" value="1"/>
</dbReference>
<dbReference type="FunFam" id="3.30.70.330:FF:000009">
    <property type="entry name" value="cytoplasmic polyadenylation element-binding protein 2 isoform X1"/>
    <property type="match status" value="1"/>
</dbReference>
<dbReference type="Gene3D" id="3.30.70.330">
    <property type="match status" value="2"/>
</dbReference>
<dbReference type="Gene3D" id="4.10.640.40">
    <property type="entry name" value="Cytoplasmic polyadenylation element-binding protein, ZZ domain"/>
    <property type="match status" value="1"/>
</dbReference>
<dbReference type="InterPro" id="IPR032296">
    <property type="entry name" value="CEBP_ZZ"/>
</dbReference>
<dbReference type="InterPro" id="IPR038446">
    <property type="entry name" value="CEBP_ZZ_sf"/>
</dbReference>
<dbReference type="InterPro" id="IPR034819">
    <property type="entry name" value="CPEB"/>
</dbReference>
<dbReference type="InterPro" id="IPR012677">
    <property type="entry name" value="Nucleotide-bd_a/b_plait_sf"/>
</dbReference>
<dbReference type="InterPro" id="IPR035979">
    <property type="entry name" value="RBD_domain_sf"/>
</dbReference>
<dbReference type="InterPro" id="IPR000504">
    <property type="entry name" value="RRM_dom"/>
</dbReference>
<dbReference type="PANTHER" id="PTHR12566">
    <property type="entry name" value="CYTOPLASMIC POLYADENYLATION ELEMENT BINDING PROTEIN CPEB"/>
    <property type="match status" value="1"/>
</dbReference>
<dbReference type="PANTHER" id="PTHR12566:SF8">
    <property type="entry name" value="CYTOPLASMIC POLYADENYLATION ELEMENT-BINDING PROTEIN 2"/>
    <property type="match status" value="1"/>
</dbReference>
<dbReference type="Pfam" id="PF16366">
    <property type="entry name" value="CEBP_ZZ"/>
    <property type="match status" value="1"/>
</dbReference>
<dbReference type="Pfam" id="PF16367">
    <property type="entry name" value="RRM_7"/>
    <property type="match status" value="1"/>
</dbReference>
<dbReference type="SMART" id="SM00360">
    <property type="entry name" value="RRM"/>
    <property type="match status" value="2"/>
</dbReference>
<dbReference type="SUPFAM" id="SSF54928">
    <property type="entry name" value="RNA-binding domain, RBD"/>
    <property type="match status" value="1"/>
</dbReference>
<dbReference type="PROSITE" id="PS50102">
    <property type="entry name" value="RRM"/>
    <property type="match status" value="2"/>
</dbReference>
<gene>
    <name type="primary">CPEB2</name>
</gene>
<comment type="function">
    <text evidence="1 4">May play a role in translational regulation of stored mRNAs in transcriptionally inactive haploid spermatids. Binds to poly(U) RNA oligomers (By similarity). Required for cell cycle progression, specifically for the transition from metaphase to anaphase (PubMed:26398195).</text>
</comment>
<comment type="subunit">
    <text evidence="1">Interacts with TENT2/GLD2.</text>
</comment>
<comment type="subcellular location">
    <subcellularLocation>
        <location evidence="1">Cytoplasm</location>
    </subcellularLocation>
</comment>
<comment type="alternative products">
    <event type="alternative splicing"/>
    <isoform>
        <id>Q7Z5Q1-2</id>
        <name>1</name>
        <sequence type="displayed"/>
    </isoform>
    <isoform>
        <id>Q7Z5Q1-3</id>
        <name>2</name>
        <sequence type="described" ref="VSP_022030 VSP_027372"/>
    </isoform>
    <isoform>
        <id>Q7Z5Q1-4</id>
        <name>3</name>
        <sequence type="described" ref="VSP_022032"/>
    </isoform>
    <isoform>
        <id>Q7Z5Q1-5</id>
        <name>4</name>
        <name>CPEB2b</name>
        <sequence type="described" ref="VSP_022031"/>
    </isoform>
    <isoform>
        <id>Q7Z5Q1-6</id>
        <name>5</name>
        <sequence type="described" ref="VSP_022031 VSP_027372"/>
    </isoform>
    <isoform>
        <id>Q7Z5Q1-7</id>
        <name>6</name>
        <sequence type="described" ref="VSP_022030 VSP_022032 VSP_027372"/>
    </isoform>
    <isoform>
        <id>Q7Z5Q1-8</id>
        <name>7</name>
        <sequence type="described" ref="VSP_055670 VSP_022032 VSP_027372"/>
    </isoform>
    <isoform>
        <id>Q7Z5Q1-9</id>
        <name>8</name>
        <sequence type="described" ref="VSP_055670 VSP_027372"/>
    </isoform>
</comment>
<comment type="similarity">
    <text evidence="7">Belongs to the RRM CPEB family.</text>
</comment>
<organism>
    <name type="scientific">Homo sapiens</name>
    <name type="common">Human</name>
    <dbReference type="NCBI Taxonomy" id="9606"/>
    <lineage>
        <taxon>Eukaryota</taxon>
        <taxon>Metazoa</taxon>
        <taxon>Chordata</taxon>
        <taxon>Craniata</taxon>
        <taxon>Vertebrata</taxon>
        <taxon>Euteleostomi</taxon>
        <taxon>Mammalia</taxon>
        <taxon>Eutheria</taxon>
        <taxon>Euarchontoglires</taxon>
        <taxon>Primates</taxon>
        <taxon>Haplorrhini</taxon>
        <taxon>Catarrhini</taxon>
        <taxon>Hominidae</taxon>
        <taxon>Homo</taxon>
    </lineage>
</organism>
<sequence>MPPPSPDSENGFYPGLPSSMNPAFFPSFSPVSPHGCTGLSVPTSGGGGGGFGGPFSATAVPPPPPPAMNIPQQQPPPPAAPQQPQSRRSPVSPQLQQQHQAAAAAFLQQRNSYNHHQPLLKQSPWSNHQSSGWGTGSMSWGAMHGRDHRRTGNMGIPGTMNQISPLKKPFSGNVIAPPKFTRSTPSLTPKSWIEDNVFRTDNNSNTLLPLQVRSSLQLPAWGSDSLQDSWCTAAGTSRIDQDRSRMYDSLNMHSLENSLIDIMRAEHDPLKGRLSYPHPGTDNLLMLNGRSSLFPIDDGLLDDGHSDQVGVLNSPTCYSAHQNGERIERFSRKVFVGGLPPDIDEDEITASFRRFGPLVVDWPHKAESKSYFPPKGYAFLLFQEESSVQALIDACIEEDGKLYLCVSSPTIKDKPVQIRPWNLSDSDFVMDGSQPLDPRKTIFVGGVPRPLRAVELAMIMDRLYGGVCYAGIDTDPELKYPKGAGRVAFSNQQSYIAAISARFVQLQHGDIDKRVEVKPYVLDDQMCDECQGARCGGKFAPFFCANVTCLQYYCEFCWANIHSRAGREFHKPLVKEGADRPRQIHFRWN</sequence>
<evidence type="ECO:0000250" key="1">
    <source>
        <dbReference type="UniProtKB" id="Q812E0"/>
    </source>
</evidence>
<evidence type="ECO:0000255" key="2">
    <source>
        <dbReference type="PROSITE-ProRule" id="PRU00176"/>
    </source>
</evidence>
<evidence type="ECO:0000256" key="3">
    <source>
        <dbReference type="SAM" id="MobiDB-lite"/>
    </source>
</evidence>
<evidence type="ECO:0000269" key="4">
    <source>
    </source>
</evidence>
<evidence type="ECO:0000303" key="5">
    <source>
    </source>
</evidence>
<evidence type="ECO:0000303" key="6">
    <source ref="1"/>
</evidence>
<evidence type="ECO:0000305" key="7"/>
<keyword id="KW-0025">Alternative splicing</keyword>
<keyword id="KW-0963">Cytoplasm</keyword>
<keyword id="KW-0597">Phosphoprotein</keyword>
<keyword id="KW-1267">Proteomics identification</keyword>
<keyword id="KW-1185">Reference proteome</keyword>
<keyword id="KW-0677">Repeat</keyword>
<keyword id="KW-0694">RNA-binding</keyword>
<keyword id="KW-0810">Translation regulation</keyword>
<protein>
    <recommendedName>
        <fullName>Cytoplasmic polyadenylation element-binding protein 2</fullName>
        <shortName>CPE-BP2</shortName>
        <shortName>CPE-binding protein 2</shortName>
        <shortName>hCPEB-2</shortName>
    </recommendedName>
</protein>